<dbReference type="EMBL" id="BC161896">
    <property type="protein sequence ID" value="AAI61896.1"/>
    <property type="molecule type" value="mRNA"/>
</dbReference>
<dbReference type="RefSeq" id="NP_001121038.1">
    <property type="nucleotide sequence ID" value="NM_001127566.1"/>
</dbReference>
<dbReference type="SMR" id="B1WBU8"/>
<dbReference type="FunCoup" id="B1WBU8">
    <property type="interactions" value="241"/>
</dbReference>
<dbReference type="STRING" id="10116.ENSRNOP00000055103"/>
<dbReference type="PhosphoSitePlus" id="B1WBU8"/>
<dbReference type="PaxDb" id="10116-ENSRNOP00000055103"/>
<dbReference type="Ensembl" id="ENSRNOT00000058301.5">
    <property type="protein sequence ID" value="ENSRNOP00000055103.2"/>
    <property type="gene ID" value="ENSRNOG00000038297.5"/>
</dbReference>
<dbReference type="GeneID" id="500685"/>
<dbReference type="KEGG" id="rno:500685"/>
<dbReference type="UCSC" id="RGD:1566112">
    <property type="organism name" value="rat"/>
</dbReference>
<dbReference type="AGR" id="RGD:1566112"/>
<dbReference type="CTD" id="400224"/>
<dbReference type="RGD" id="1566112">
    <property type="gene designation" value="Plekhd1"/>
</dbReference>
<dbReference type="eggNOG" id="ENOG502QTF5">
    <property type="taxonomic scope" value="Eukaryota"/>
</dbReference>
<dbReference type="GeneTree" id="ENSGT00950000183017"/>
<dbReference type="HOGENOM" id="CLU_035364_0_0_1"/>
<dbReference type="InParanoid" id="B1WBU8"/>
<dbReference type="OMA" id="ANEDMGM"/>
<dbReference type="OrthoDB" id="80397at9989"/>
<dbReference type="PhylomeDB" id="B1WBU8"/>
<dbReference type="TreeFam" id="TF320494"/>
<dbReference type="PRO" id="PR:B1WBU8"/>
<dbReference type="Proteomes" id="UP000002494">
    <property type="component" value="Chromosome 6"/>
</dbReference>
<dbReference type="Bgee" id="ENSRNOG00000038297">
    <property type="expression patterns" value="Expressed in ovary and 10 other cell types or tissues"/>
</dbReference>
<dbReference type="CDD" id="cd13281">
    <property type="entry name" value="PH_PLEKHD1"/>
    <property type="match status" value="1"/>
</dbReference>
<dbReference type="Gene3D" id="2.30.29.30">
    <property type="entry name" value="Pleckstrin-homology domain (PH domain)/Phosphotyrosine-binding domain (PTB)"/>
    <property type="match status" value="1"/>
</dbReference>
<dbReference type="InterPro" id="IPR011993">
    <property type="entry name" value="PH-like_dom_sf"/>
</dbReference>
<dbReference type="InterPro" id="IPR001849">
    <property type="entry name" value="PH_domain"/>
</dbReference>
<dbReference type="PANTHER" id="PTHR14383:SF1">
    <property type="entry name" value="PLECKSTRIN HOMOLOGY DOMAIN-CONTAINING FAMILY D MEMBER 1"/>
    <property type="match status" value="1"/>
</dbReference>
<dbReference type="PANTHER" id="PTHR14383">
    <property type="entry name" value="SWAP-70 RECOMBINASE"/>
    <property type="match status" value="1"/>
</dbReference>
<dbReference type="Pfam" id="PF00169">
    <property type="entry name" value="PH"/>
    <property type="match status" value="1"/>
</dbReference>
<dbReference type="SMART" id="SM00233">
    <property type="entry name" value="PH"/>
    <property type="match status" value="1"/>
</dbReference>
<dbReference type="SUPFAM" id="SSF50729">
    <property type="entry name" value="PH domain-like"/>
    <property type="match status" value="1"/>
</dbReference>
<dbReference type="PROSITE" id="PS50003">
    <property type="entry name" value="PH_DOMAIN"/>
    <property type="match status" value="1"/>
</dbReference>
<protein>
    <recommendedName>
        <fullName>Pleckstrin homology domain-containing family D member 1</fullName>
        <shortName>PH domain-containing family D member 1</shortName>
    </recommendedName>
</protein>
<keyword id="KW-0175">Coiled coil</keyword>
<keyword id="KW-0488">Methylation</keyword>
<keyword id="KW-1185">Reference proteome</keyword>
<reference key="1">
    <citation type="journal article" date="2004" name="Genome Res.">
        <title>The status, quality, and expansion of the NIH full-length cDNA project: the Mammalian Gene Collection (MGC).</title>
        <authorList>
            <consortium name="The MGC Project Team"/>
        </authorList>
    </citation>
    <scope>NUCLEOTIDE SEQUENCE [LARGE SCALE MRNA]</scope>
    <source>
        <tissue>Brain</tissue>
    </source>
</reference>
<evidence type="ECO:0000250" key="1">
    <source>
        <dbReference type="UniProtKB" id="B2RPU2"/>
    </source>
</evidence>
<evidence type="ECO:0000255" key="2"/>
<evidence type="ECO:0000255" key="3">
    <source>
        <dbReference type="PROSITE-ProRule" id="PRU00145"/>
    </source>
</evidence>
<evidence type="ECO:0000256" key="4">
    <source>
        <dbReference type="SAM" id="MobiDB-lite"/>
    </source>
</evidence>
<evidence type="ECO:0000305" key="5"/>
<sequence length="505" mass="59055">MFTSKSNSVSPSPSLEQADADALDISTKVQLYGVLWKRPFGRSSAKWSRRFFIIKESFLLYYSESERKSFETNKYFNIHPKGVIPLGGCLVEAREEPSMPYAMKISHQDFHGNVLLAAESEFEQTQWLEMLQESGKVTWKNAQLGEAMIKSLEAQGLQLAKEKQEYLDKLMEETEELCLQREQREELERLNQVLEAEKQQFEEVVQELKVEQEQIKRELELTARCLKGVEQEKKELRHLTESLQHTLEELSIEKKKTLEMLEEDKNQPQPLTNQSEQPPATDGLHSNLRQIEERMQELLAEKLLAEKRMKENEERSRALEEEREFYSSQSQALQNSLQELTAEKQQAEQELKAEVKVRMDLERRLREAEAALRSLEQGLNSKVRNKEKEERMRADVSHLKRFFEECIRNAELEAKMPVIMKNSVYIHKAATRRIKSCRFHRRRSSTSWNDMKPSQSFMTSQLEANNIEELKEVAKRLSRDQRFRESIYHIMATQPGASALPRGGK</sequence>
<comment type="similarity">
    <text evidence="5">Belongs to the PLEKHD1 family.</text>
</comment>
<proteinExistence type="evidence at transcript level"/>
<accession>B1WBU8</accession>
<gene>
    <name type="primary">Plekhd1</name>
</gene>
<organism>
    <name type="scientific">Rattus norvegicus</name>
    <name type="common">Rat</name>
    <dbReference type="NCBI Taxonomy" id="10116"/>
    <lineage>
        <taxon>Eukaryota</taxon>
        <taxon>Metazoa</taxon>
        <taxon>Chordata</taxon>
        <taxon>Craniata</taxon>
        <taxon>Vertebrata</taxon>
        <taxon>Euteleostomi</taxon>
        <taxon>Mammalia</taxon>
        <taxon>Eutheria</taxon>
        <taxon>Euarchontoglires</taxon>
        <taxon>Glires</taxon>
        <taxon>Rodentia</taxon>
        <taxon>Myomorpha</taxon>
        <taxon>Muroidea</taxon>
        <taxon>Muridae</taxon>
        <taxon>Murinae</taxon>
        <taxon>Rattus</taxon>
    </lineage>
</organism>
<feature type="chain" id="PRO_0000349197" description="Pleckstrin homology domain-containing family D member 1">
    <location>
        <begin position="1"/>
        <end position="505"/>
    </location>
</feature>
<feature type="domain" description="PH" evidence="3">
    <location>
        <begin position="28"/>
        <end position="136"/>
    </location>
</feature>
<feature type="region of interest" description="Disordered" evidence="4">
    <location>
        <begin position="264"/>
        <end position="284"/>
    </location>
</feature>
<feature type="coiled-coil region" evidence="2">
    <location>
        <begin position="146"/>
        <end position="391"/>
    </location>
</feature>
<feature type="compositionally biased region" description="Polar residues" evidence="4">
    <location>
        <begin position="267"/>
        <end position="278"/>
    </location>
</feature>
<feature type="modified residue" description="Omega-N-methylarginine" evidence="1">
    <location>
        <position position="502"/>
    </location>
</feature>
<name>PLHD1_RAT</name>